<gene>
    <name evidence="1" type="primary">ilvD</name>
    <name type="ordered locus">Mpe_A1387</name>
</gene>
<organism>
    <name type="scientific">Methylibium petroleiphilum (strain ATCC BAA-1232 / LMG 22953 / PM1)</name>
    <dbReference type="NCBI Taxonomy" id="420662"/>
    <lineage>
        <taxon>Bacteria</taxon>
        <taxon>Pseudomonadati</taxon>
        <taxon>Pseudomonadota</taxon>
        <taxon>Betaproteobacteria</taxon>
        <taxon>Burkholderiales</taxon>
        <taxon>Sphaerotilaceae</taxon>
        <taxon>Methylibium</taxon>
    </lineage>
</organism>
<dbReference type="EC" id="4.2.1.9" evidence="1"/>
<dbReference type="EMBL" id="CP000555">
    <property type="protein sequence ID" value="ABM94349.1"/>
    <property type="molecule type" value="Genomic_DNA"/>
</dbReference>
<dbReference type="RefSeq" id="WP_011828986.1">
    <property type="nucleotide sequence ID" value="NC_008825.1"/>
</dbReference>
<dbReference type="SMR" id="A2SFL0"/>
<dbReference type="STRING" id="420662.Mpe_A1387"/>
<dbReference type="KEGG" id="mpt:Mpe_A1387"/>
<dbReference type="eggNOG" id="COG0129">
    <property type="taxonomic scope" value="Bacteria"/>
</dbReference>
<dbReference type="HOGENOM" id="CLU_014271_4_2_4"/>
<dbReference type="UniPathway" id="UPA00047">
    <property type="reaction ID" value="UER00057"/>
</dbReference>
<dbReference type="UniPathway" id="UPA00049">
    <property type="reaction ID" value="UER00061"/>
</dbReference>
<dbReference type="Proteomes" id="UP000000366">
    <property type="component" value="Chromosome"/>
</dbReference>
<dbReference type="GO" id="GO:0051537">
    <property type="term" value="F:2 iron, 2 sulfur cluster binding"/>
    <property type="evidence" value="ECO:0007669"/>
    <property type="project" value="UniProtKB-UniRule"/>
</dbReference>
<dbReference type="GO" id="GO:0004160">
    <property type="term" value="F:dihydroxy-acid dehydratase activity"/>
    <property type="evidence" value="ECO:0007669"/>
    <property type="project" value="UniProtKB-UniRule"/>
</dbReference>
<dbReference type="GO" id="GO:0000287">
    <property type="term" value="F:magnesium ion binding"/>
    <property type="evidence" value="ECO:0007669"/>
    <property type="project" value="UniProtKB-UniRule"/>
</dbReference>
<dbReference type="GO" id="GO:0009097">
    <property type="term" value="P:isoleucine biosynthetic process"/>
    <property type="evidence" value="ECO:0007669"/>
    <property type="project" value="UniProtKB-UniRule"/>
</dbReference>
<dbReference type="GO" id="GO:0009099">
    <property type="term" value="P:L-valine biosynthetic process"/>
    <property type="evidence" value="ECO:0007669"/>
    <property type="project" value="UniProtKB-UniRule"/>
</dbReference>
<dbReference type="FunFam" id="3.50.30.80:FF:000001">
    <property type="entry name" value="Dihydroxy-acid dehydratase"/>
    <property type="match status" value="1"/>
</dbReference>
<dbReference type="Gene3D" id="3.50.30.80">
    <property type="entry name" value="IlvD/EDD C-terminal domain-like"/>
    <property type="match status" value="1"/>
</dbReference>
<dbReference type="HAMAP" id="MF_00012">
    <property type="entry name" value="IlvD"/>
    <property type="match status" value="1"/>
</dbReference>
<dbReference type="InterPro" id="IPR050165">
    <property type="entry name" value="DHAD_IlvD/Edd"/>
</dbReference>
<dbReference type="InterPro" id="IPR042096">
    <property type="entry name" value="Dihydro-acid_dehy_C"/>
</dbReference>
<dbReference type="InterPro" id="IPR004404">
    <property type="entry name" value="DihydroxyA_deHydtase"/>
</dbReference>
<dbReference type="InterPro" id="IPR020558">
    <property type="entry name" value="DiOHA_6PGluconate_deHydtase_CS"/>
</dbReference>
<dbReference type="InterPro" id="IPR056740">
    <property type="entry name" value="ILV_EDD_C"/>
</dbReference>
<dbReference type="InterPro" id="IPR000581">
    <property type="entry name" value="ILV_EDD_N"/>
</dbReference>
<dbReference type="InterPro" id="IPR037237">
    <property type="entry name" value="IlvD/EDD_N"/>
</dbReference>
<dbReference type="NCBIfam" id="TIGR00110">
    <property type="entry name" value="ilvD"/>
    <property type="match status" value="1"/>
</dbReference>
<dbReference type="NCBIfam" id="NF002068">
    <property type="entry name" value="PRK00911.1"/>
    <property type="match status" value="1"/>
</dbReference>
<dbReference type="PANTHER" id="PTHR21000">
    <property type="entry name" value="DIHYDROXY-ACID DEHYDRATASE DAD"/>
    <property type="match status" value="1"/>
</dbReference>
<dbReference type="PANTHER" id="PTHR21000:SF5">
    <property type="entry name" value="DIHYDROXY-ACID DEHYDRATASE, MITOCHONDRIAL"/>
    <property type="match status" value="1"/>
</dbReference>
<dbReference type="Pfam" id="PF24877">
    <property type="entry name" value="ILV_EDD_C"/>
    <property type="match status" value="1"/>
</dbReference>
<dbReference type="Pfam" id="PF00920">
    <property type="entry name" value="ILVD_EDD_N"/>
    <property type="match status" value="1"/>
</dbReference>
<dbReference type="SUPFAM" id="SSF143975">
    <property type="entry name" value="IlvD/EDD N-terminal domain-like"/>
    <property type="match status" value="1"/>
</dbReference>
<dbReference type="SUPFAM" id="SSF52016">
    <property type="entry name" value="LeuD/IlvD-like"/>
    <property type="match status" value="1"/>
</dbReference>
<dbReference type="PROSITE" id="PS00886">
    <property type="entry name" value="ILVD_EDD_1"/>
    <property type="match status" value="1"/>
</dbReference>
<dbReference type="PROSITE" id="PS00887">
    <property type="entry name" value="ILVD_EDD_2"/>
    <property type="match status" value="1"/>
</dbReference>
<name>ILVD_METPP</name>
<accession>A2SFL0</accession>
<keyword id="KW-0001">2Fe-2S</keyword>
<keyword id="KW-0028">Amino-acid biosynthesis</keyword>
<keyword id="KW-0100">Branched-chain amino acid biosynthesis</keyword>
<keyword id="KW-0408">Iron</keyword>
<keyword id="KW-0411">Iron-sulfur</keyword>
<keyword id="KW-0456">Lyase</keyword>
<keyword id="KW-0460">Magnesium</keyword>
<keyword id="KW-0479">Metal-binding</keyword>
<keyword id="KW-1185">Reference proteome</keyword>
<comment type="function">
    <text evidence="1">Functions in the biosynthesis of branched-chain amino acids. Catalyzes the dehydration of (2R,3R)-2,3-dihydroxy-3-methylpentanoate (2,3-dihydroxy-3-methylvalerate) into 2-oxo-3-methylpentanoate (2-oxo-3-methylvalerate) and of (2R)-2,3-dihydroxy-3-methylbutanoate (2,3-dihydroxyisovalerate) into 2-oxo-3-methylbutanoate (2-oxoisovalerate), the penultimate precursor to L-isoleucine and L-valine, respectively.</text>
</comment>
<comment type="catalytic activity">
    <reaction evidence="1">
        <text>(2R)-2,3-dihydroxy-3-methylbutanoate = 3-methyl-2-oxobutanoate + H2O</text>
        <dbReference type="Rhea" id="RHEA:24809"/>
        <dbReference type="ChEBI" id="CHEBI:11851"/>
        <dbReference type="ChEBI" id="CHEBI:15377"/>
        <dbReference type="ChEBI" id="CHEBI:49072"/>
        <dbReference type="EC" id="4.2.1.9"/>
    </reaction>
    <physiologicalReaction direction="left-to-right" evidence="1">
        <dbReference type="Rhea" id="RHEA:24810"/>
    </physiologicalReaction>
</comment>
<comment type="catalytic activity">
    <reaction evidence="1">
        <text>(2R,3R)-2,3-dihydroxy-3-methylpentanoate = (S)-3-methyl-2-oxopentanoate + H2O</text>
        <dbReference type="Rhea" id="RHEA:27694"/>
        <dbReference type="ChEBI" id="CHEBI:15377"/>
        <dbReference type="ChEBI" id="CHEBI:35146"/>
        <dbReference type="ChEBI" id="CHEBI:49258"/>
        <dbReference type="EC" id="4.2.1.9"/>
    </reaction>
    <physiologicalReaction direction="left-to-right" evidence="1">
        <dbReference type="Rhea" id="RHEA:27695"/>
    </physiologicalReaction>
</comment>
<comment type="cofactor">
    <cofactor evidence="1">
        <name>[2Fe-2S] cluster</name>
        <dbReference type="ChEBI" id="CHEBI:190135"/>
    </cofactor>
    <text evidence="1">Binds 1 [2Fe-2S] cluster per subunit. This cluster acts as a Lewis acid cofactor.</text>
</comment>
<comment type="cofactor">
    <cofactor evidence="1">
        <name>Mg(2+)</name>
        <dbReference type="ChEBI" id="CHEBI:18420"/>
    </cofactor>
</comment>
<comment type="pathway">
    <text evidence="1">Amino-acid biosynthesis; L-isoleucine biosynthesis; L-isoleucine from 2-oxobutanoate: step 3/4.</text>
</comment>
<comment type="pathway">
    <text evidence="1">Amino-acid biosynthesis; L-valine biosynthesis; L-valine from pyruvate: step 3/4.</text>
</comment>
<comment type="subunit">
    <text evidence="1">Homodimer.</text>
</comment>
<comment type="similarity">
    <text evidence="1">Belongs to the IlvD/Edd family.</text>
</comment>
<reference key="1">
    <citation type="journal article" date="2007" name="J. Bacteriol.">
        <title>Whole-genome analysis of the methyl tert-butyl ether-degrading beta-proteobacterium Methylibium petroleiphilum PM1.</title>
        <authorList>
            <person name="Kane S.R."/>
            <person name="Chakicherla A.Y."/>
            <person name="Chain P.S.G."/>
            <person name="Schmidt R."/>
            <person name="Shin M.W."/>
            <person name="Legler T.C."/>
            <person name="Scow K.M."/>
            <person name="Larimer F.W."/>
            <person name="Lucas S.M."/>
            <person name="Richardson P.M."/>
            <person name="Hristova K.R."/>
        </authorList>
    </citation>
    <scope>NUCLEOTIDE SEQUENCE [LARGE SCALE GENOMIC DNA]</scope>
    <source>
        <strain>ATCC BAA-1232 / LMG 22953 / PM1</strain>
    </source>
</reference>
<proteinExistence type="inferred from homology"/>
<feature type="chain" id="PRO_1000001009" description="Dihydroxy-acid dehydratase">
    <location>
        <begin position="1"/>
        <end position="560"/>
    </location>
</feature>
<feature type="active site" description="Proton acceptor" evidence="1">
    <location>
        <position position="473"/>
    </location>
</feature>
<feature type="binding site" evidence="1">
    <location>
        <position position="50"/>
    </location>
    <ligand>
        <name>[2Fe-2S] cluster</name>
        <dbReference type="ChEBI" id="CHEBI:190135"/>
    </ligand>
</feature>
<feature type="binding site" evidence="1">
    <location>
        <position position="82"/>
    </location>
    <ligand>
        <name>Mg(2+)</name>
        <dbReference type="ChEBI" id="CHEBI:18420"/>
    </ligand>
</feature>
<feature type="binding site" evidence="1">
    <location>
        <position position="123"/>
    </location>
    <ligand>
        <name>[2Fe-2S] cluster</name>
        <dbReference type="ChEBI" id="CHEBI:190135"/>
    </ligand>
</feature>
<feature type="binding site" evidence="1">
    <location>
        <position position="124"/>
    </location>
    <ligand>
        <name>Mg(2+)</name>
        <dbReference type="ChEBI" id="CHEBI:18420"/>
    </ligand>
</feature>
<feature type="binding site" description="via carbamate group" evidence="1">
    <location>
        <position position="125"/>
    </location>
    <ligand>
        <name>Mg(2+)</name>
        <dbReference type="ChEBI" id="CHEBI:18420"/>
    </ligand>
</feature>
<feature type="binding site" evidence="1">
    <location>
        <position position="195"/>
    </location>
    <ligand>
        <name>[2Fe-2S] cluster</name>
        <dbReference type="ChEBI" id="CHEBI:190135"/>
    </ligand>
</feature>
<feature type="binding site" evidence="1">
    <location>
        <position position="447"/>
    </location>
    <ligand>
        <name>Mg(2+)</name>
        <dbReference type="ChEBI" id="CHEBI:18420"/>
    </ligand>
</feature>
<feature type="modified residue" description="N6-carboxylysine" evidence="1">
    <location>
        <position position="125"/>
    </location>
</feature>
<evidence type="ECO:0000255" key="1">
    <source>
        <dbReference type="HAMAP-Rule" id="MF_00012"/>
    </source>
</evidence>
<protein>
    <recommendedName>
        <fullName evidence="1">Dihydroxy-acid dehydratase</fullName>
        <shortName evidence="1">DAD</shortName>
        <ecNumber evidence="1">4.2.1.9</ecNumber>
    </recommendedName>
</protein>
<sequence>MSINRRSKNITEGVARAPNRSMYYAMGYQEADFKKPMIGVANGHSTITPCNSGLQKLADAAVEGIEAAGGNAQIFGTPTISDGMAMGTEGMKYSLVSREVIADCVETCVGGQWMDGVLVVGGCDKNMPGGMMGMLRANVPAIYVYGGTILPGKYKGQDLNIVSVFEAVGQFTAGNMSEEDFCQIERRAIPGSGSCGGMYTANTMSSAFEALGMSLPFASTMANVEDPIVAHTKEAARVLVEAVKADLKPRDIVTRKSIENAVAVIMATGGSTNAVLHFLAIAHAAGVEWTIDDFERVRRKVPVLCDLKPSGRYLAIDLHRAGGIPQVMKTLLAAGLIHGDCITITGRTVAENLADIPDAPRADQDVIRPITKPMYEQGHLAILKGNLSPEGAVAKITGLKNPSITGPARVFDDEQSALAAIMAKQIQAGDVMVLRYLGPMGGPGMPEMLAPTGALIGQGLGESVGLITDGRFSGGTWGMVVGHVAPEAAAGGTIALVQEGDSITIDAHTLVLNLNVSEAEIAKRRAAWKAPAPRYTRGVLAKFAKNASSASSGAVLDRFE</sequence>